<dbReference type="EMBL" id="FC771539">
    <property type="status" value="NOT_ANNOTATED_CDS"/>
    <property type="molecule type" value="mRNA"/>
</dbReference>
<dbReference type="SMR" id="B3A0S2"/>
<dbReference type="GO" id="GO:0005576">
    <property type="term" value="C:extracellular region"/>
    <property type="evidence" value="ECO:0007669"/>
    <property type="project" value="UniProtKB-SubCell"/>
</dbReference>
<sequence length="230" mass="24238">MTSYDEEAAINPKAVGNKSSLLKYIIGGGVLAVVGVVAVMVSLQVSGNLVKSEANTLAAQSSGAQRGDRLDLDNDDDLEDEIKEIDDKFKKEFDTLLDNVIQEVNKQLKADLNGGATAGGVNNGGDTDESSNDTDEDSNDSDSKDTDSDSKDTDSDSKDSDSNDTDSDSNGSDSKDTDSDSKDSDSKDTDSDSKDTDSDSKDSDSKDTDSDSKDTDSDSKDSDSNDTDSD</sequence>
<reference evidence="5" key="1">
    <citation type="submission" date="2007-12" db="EMBL/GenBank/DDBJ databases">
        <title>DOE Joint Genome Institute Lottia gigantea EST project.</title>
        <authorList>
            <person name="Richardson P."/>
            <person name="Lucas S."/>
            <person name="Rokhsar D."/>
            <person name="Wang M."/>
            <person name="Lindquist E.A."/>
        </authorList>
    </citation>
    <scope>NUCLEOTIDE SEQUENCE [LARGE SCALE MRNA]</scope>
    <scope>IDENTIFICATION</scope>
    <source>
        <tissue evidence="4">Larva</tissue>
    </source>
</reference>
<reference key="2">
    <citation type="journal article" date="2013" name="FEBS J.">
        <title>The shell-forming proteome of Lottia gigantea reveals both deep conservations and lineage-specific novelties.</title>
        <authorList>
            <person name="Marie B."/>
            <person name="Jackson D.J."/>
            <person name="Ramos-Silva P."/>
            <person name="Zanella-Cleon I."/>
            <person name="Guichard N."/>
            <person name="Marin F."/>
        </authorList>
    </citation>
    <scope>PROTEIN SEQUENCE OF 92-106</scope>
    <scope>SUBCELLULAR LOCATION</scope>
    <scope>TISSUE SPECIFICITY</scope>
    <source>
        <tissue>Shell</tissue>
    </source>
</reference>
<proteinExistence type="evidence at protein level"/>
<evidence type="ECO:0000255" key="1"/>
<evidence type="ECO:0000256" key="2">
    <source>
        <dbReference type="SAM" id="MobiDB-lite"/>
    </source>
</evidence>
<evidence type="ECO:0000269" key="3">
    <source>
    </source>
</evidence>
<evidence type="ECO:0000269" key="4">
    <source ref="1"/>
</evidence>
<evidence type="ECO:0000305" key="5"/>
<feature type="chain" id="PRO_0000415242" description="Aspartate and serine-rich protein">
    <location>
        <begin position="1"/>
        <end position="230"/>
    </location>
</feature>
<feature type="region of interest" description="Disordered" evidence="2">
    <location>
        <begin position="112"/>
        <end position="230"/>
    </location>
</feature>
<feature type="compositionally biased region" description="Acidic residues" evidence="2">
    <location>
        <begin position="126"/>
        <end position="140"/>
    </location>
</feature>
<feature type="compositionally biased region" description="Basic and acidic residues" evidence="2">
    <location>
        <begin position="141"/>
        <end position="161"/>
    </location>
</feature>
<feature type="compositionally biased region" description="Basic and acidic residues" evidence="2">
    <location>
        <begin position="173"/>
        <end position="223"/>
    </location>
</feature>
<feature type="glycosylation site" description="N-linked (GlcNAc...) asparagine" evidence="1">
    <location>
        <position position="17"/>
    </location>
</feature>
<feature type="glycosylation site" description="N-linked (GlcNAc...) asparagine" evidence="1">
    <location>
        <position position="132"/>
    </location>
</feature>
<feature type="glycosylation site" description="N-linked (GlcNAc...) asparagine" evidence="1">
    <location>
        <position position="139"/>
    </location>
</feature>
<feature type="glycosylation site" description="N-linked (GlcNAc...) asparagine" evidence="1">
    <location>
        <position position="163"/>
    </location>
</feature>
<feature type="glycosylation site" description="N-linked (GlcNAc...) asparagine" evidence="1">
    <location>
        <position position="170"/>
    </location>
</feature>
<feature type="glycosylation site" description="N-linked (GlcNAc...) asparagine" evidence="1">
    <location>
        <position position="225"/>
    </location>
</feature>
<feature type="non-terminal residue" evidence="5">
    <location>
        <position position="230"/>
    </location>
</feature>
<comment type="subcellular location">
    <subcellularLocation>
        <location evidence="3">Secreted</location>
    </subcellularLocation>
</comment>
<comment type="tissue specificity">
    <text evidence="3">Component of the acid-insoluble organic matrix of calcified layers of the shell (at protein level).</text>
</comment>
<protein>
    <recommendedName>
        <fullName>Aspartate and serine-rich protein</fullName>
    </recommendedName>
    <alternativeName>
        <fullName>Uncharacterized shell protein 23</fullName>
        <shortName>LUSP-23</shortName>
    </alternativeName>
</protein>
<organism>
    <name type="scientific">Lottia gigantea</name>
    <name type="common">Giant owl limpet</name>
    <dbReference type="NCBI Taxonomy" id="225164"/>
    <lineage>
        <taxon>Eukaryota</taxon>
        <taxon>Metazoa</taxon>
        <taxon>Spiralia</taxon>
        <taxon>Lophotrochozoa</taxon>
        <taxon>Mollusca</taxon>
        <taxon>Gastropoda</taxon>
        <taxon>Patellogastropoda</taxon>
        <taxon>Lottioidea</taxon>
        <taxon>Lottiidae</taxon>
        <taxon>Lottia</taxon>
    </lineage>
</organism>
<accession>B3A0S2</accession>
<keyword id="KW-0903">Direct protein sequencing</keyword>
<keyword id="KW-0325">Glycoprotein</keyword>
<keyword id="KW-0964">Secreted</keyword>
<name>ASRP_LOTGI</name>